<feature type="propeptide" id="PRO_0000278269">
    <location>
        <begin position="1"/>
        <end position="134"/>
    </location>
</feature>
<feature type="peptide" id="PRO_0000022271" description="Speract-like 5" evidence="1">
    <location>
        <begin position="135"/>
        <end position="144"/>
    </location>
</feature>
<feature type="propeptide" id="PRO_0000278270">
    <location>
        <begin position="146"/>
        <end position="190"/>
    </location>
</feature>
<feature type="peptide" id="PRO_0000022272" description="Speract-like 4" evidence="1">
    <location>
        <begin position="191"/>
        <end position="200"/>
    </location>
</feature>
<feature type="peptide" id="PRO_0000022273" description="Speract-like 1">
    <location>
        <begin position="202"/>
        <end position="211"/>
    </location>
</feature>
<feature type="peptide" id="PRO_0000022274" description="Speract-like 2">
    <location>
        <begin position="213"/>
        <end position="222"/>
    </location>
</feature>
<feature type="peptide" id="PRO_0000022275" description="Speract">
    <location>
        <begin position="224"/>
        <end position="233"/>
    </location>
</feature>
<feature type="peptide" id="PRO_0000022276" description="Speract">
    <location>
        <begin position="235"/>
        <end position="244"/>
    </location>
</feature>
<feature type="peptide" id="PRO_0000022277" description="Speract">
    <location>
        <begin position="246"/>
        <end position="255"/>
    </location>
</feature>
<feature type="peptide" id="PRO_0000022278" description="Speract">
    <location>
        <begin position="257"/>
        <end position="266"/>
    </location>
</feature>
<feature type="peptide" id="PRO_0000022279" description="Speract-like 1">
    <location>
        <begin position="268"/>
        <end position="277"/>
    </location>
</feature>
<feature type="peptide" id="PRO_0000022280" description="Speract-like 3">
    <location>
        <begin position="279"/>
        <end position="288"/>
    </location>
</feature>
<feature type="propeptide" id="PRO_0000278271">
    <location>
        <begin position="290"/>
        <end position="296"/>
    </location>
</feature>
<keyword id="KW-0165">Cleavage on pair of basic residues</keyword>
<keyword id="KW-0903">Direct protein sequencing</keyword>
<keyword id="KW-1185">Reference proteome</keyword>
<organism>
    <name type="scientific">Strongylocentrotus purpuratus</name>
    <name type="common">Purple sea urchin</name>
    <dbReference type="NCBI Taxonomy" id="7668"/>
    <lineage>
        <taxon>Eukaryota</taxon>
        <taxon>Metazoa</taxon>
        <taxon>Echinodermata</taxon>
        <taxon>Eleutherozoa</taxon>
        <taxon>Echinozoa</taxon>
        <taxon>Echinoidea</taxon>
        <taxon>Euechinoidea</taxon>
        <taxon>Echinacea</taxon>
        <taxon>Camarodonta</taxon>
        <taxon>Echinidea</taxon>
        <taxon>Strongylocentrotidae</taxon>
        <taxon>Strongylocentrotus</taxon>
    </lineage>
</organism>
<name>SAPR_STRPU</name>
<protein>
    <recommendedName>
        <fullName>Sperm-activating peptides</fullName>
    </recommendedName>
    <component>
        <recommendedName>
            <fullName>Speract</fullName>
        </recommendedName>
    </component>
    <component>
        <recommendedName>
            <fullName>Speract-like 1</fullName>
        </recommendedName>
    </component>
    <component>
        <recommendedName>
            <fullName>Speract-like 2</fullName>
        </recommendedName>
    </component>
    <component>
        <recommendedName>
            <fullName>Speract-like 3</fullName>
        </recommendedName>
    </component>
    <component>
        <recommendedName>
            <fullName>Speract-like 4</fullName>
        </recommendedName>
    </component>
    <component>
        <recommendedName>
            <fullName>Speract-like 5</fullName>
        </recommendedName>
    </component>
</protein>
<dbReference type="EMBL" id="J02896">
    <property type="protein sequence ID" value="AAA30079.1"/>
    <property type="molecule type" value="mRNA"/>
</dbReference>
<dbReference type="EMBL" id="J02896">
    <property type="protein sequence ID" value="AAA30080.1"/>
    <property type="status" value="ALT_INIT"/>
    <property type="molecule type" value="mRNA"/>
</dbReference>
<dbReference type="PIR" id="A34543">
    <property type="entry name" value="A34543"/>
</dbReference>
<dbReference type="RefSeq" id="NP_999771.1">
    <property type="nucleotide sequence ID" value="NM_214606.1"/>
</dbReference>
<dbReference type="STRING" id="7668.P11761"/>
<dbReference type="EnsemblMetazoa" id="NM_214606.1-2">
    <property type="protein sequence ID" value="NP_999771"/>
    <property type="gene ID" value="LOC373457-2"/>
</dbReference>
<dbReference type="GeneID" id="373457"/>
<dbReference type="KEGG" id="spu:373457"/>
<dbReference type="InParanoid" id="P11761"/>
<dbReference type="OMA" id="ESIAHMA"/>
<dbReference type="OrthoDB" id="10490839at2759"/>
<dbReference type="PhylomeDB" id="P11761"/>
<dbReference type="Proteomes" id="UP000007110">
    <property type="component" value="Unassembled WGS sequence"/>
</dbReference>
<proteinExistence type="evidence at protein level"/>
<evidence type="ECO:0000255" key="1"/>
<evidence type="ECO:0000305" key="2"/>
<reference key="1">
    <citation type="journal article" date="1990" name="Biochemistry">
        <title>A single mRNA encodes multiple copies of the egg peptide speract.</title>
        <authorList>
            <person name="Ramarao C.S."/>
            <person name="Burks D.J."/>
            <person name="Garbers D.L."/>
        </authorList>
    </citation>
    <scope>NUCLEOTIDE SEQUENCE [MRNA]</scope>
    <source>
        <tissue>Ovary</tissue>
    </source>
</reference>
<reference key="2">
    <citation type="journal article" date="1982" name="J. Biol. Chem.">
        <title>The amino acid sequence and chemical synthesis of speract and of speract analogues.</title>
        <authorList>
            <person name="Garbers D.L."/>
            <person name="Watkins H.D."/>
            <person name="Hansbrough J.R."/>
            <person name="Smith A."/>
            <person name="Misono K.S."/>
        </authorList>
    </citation>
    <scope>PROTEIN SEQUENCE OF SPERACT</scope>
    <scope>SYNTHESIS</scope>
    <source>
        <tissue>Egg</tissue>
    </source>
</reference>
<reference key="3">
    <citation type="journal article" date="1981" name="J. Biol. Chem.">
        <title>Speract. Purification and characterization of a peptide associated with eggs that activates spermatozoa.</title>
        <authorList>
            <person name="Hansbrough J.R."/>
            <person name="Garbers D.L."/>
        </authorList>
    </citation>
    <scope>PROTEIN SEQUENCE OF SPERACT</scope>
    <source>
        <tissue>Egg</tissue>
    </source>
</reference>
<accession>P11761</accession>
<comment type="function">
    <text>Causes stimulation of sperm respiration and motility through intracellular alkalinization, transient elevations of cAMP, cGMP and calcium levels in sperm cells, and transient activation and subsequent inactivation of the membrane form of guanylate cyclase.</text>
</comment>
<comment type="sequence caution" evidence="2">
    <conflict type="erroneous initiation">
        <sequence resource="EMBL-CDS" id="AAA30080"/>
    </conflict>
</comment>
<sequence length="296" mass="30647">MPPGPRGVASGKPVISGQDQKYTLADSSKDLEGIAHMAIVDSLSPLHISLSSLESAWNNLLNIASQEDYSIPELSIPKIDVKSILSCKPKYSPKYPVVLQYISDHYVQVQDHIANAKELTEGLKFVSQLIMYKKIDHDTLASVSKMLSNYLTDYASTISSLKSVVCQDQTAPSHPMDESYMDTPLSMILKGTMPTGAGVDKGFALGGGGVGKGFNLNGGGVGKGFDLNGGGVGKGFDLNGGGVGKGFDLNGGGVGKGFDLNGGGVGKGFALGGGGVGKGFSLTGGGVGREVEIKDW</sequence>